<sequence length="524" mass="57301">MNRQFTCKSGAAAKGGFSGCSAVLSGGSSSSYRAGGKGLSGGFGSRSLYSLGGIRNISLNMASGSGKSGYGFGRGRASGFAGSMFGSVALGPVCPTVCPPGGIHQVTVNESLLAPLNVELDPEIQKVRAQEREQIKALNNKFASFIDKVRFLEQQNQVLETKWELLQQLDLNNCKNNLEPILEGYISNLRKQLETLSGDRVRLDSELRSVRDVVEDYKKKYEEEINRRTAAENEFVLLKKDVDAAYANKEELQAKVDSMDQEIKFFKCLYEAEIAQIQSHISDMSVILSMDNNRDLNLDSIIDEVRAQYEEIALKSKAEAEALYQTKFQELQLAAGRHGDDLKNTKNEISELTRLIQRIRSEIENVKKQASNLETAIADAEQRGDSALKDARAKLDELESALHQAKEELARMLREYQELMSLKLALDMEIATYRKLLESEECRMSGEFPSPVSISIISSTSGSSGYGLRPSSVSGGYVANSSSCISGVCSVRGGEGRSRGSTSDYKDTLGKGSSQSASSKKASR</sequence>
<proteinExistence type="evidence at transcript level"/>
<gene>
    <name type="primary">KRT71</name>
</gene>
<accession>E1AB55</accession>
<feature type="chain" id="PRO_0000452323" description="Keratin, type II cytoskeletal 71">
    <location>
        <begin position="1"/>
        <end position="524"/>
    </location>
</feature>
<feature type="domain" description="IF rod" evidence="4">
    <location>
        <begin position="131"/>
        <end position="444"/>
    </location>
</feature>
<feature type="region of interest" description="Head" evidence="3">
    <location>
        <begin position="1"/>
        <end position="130"/>
    </location>
</feature>
<feature type="region of interest" description="Coil 1A" evidence="3">
    <location>
        <begin position="131"/>
        <end position="166"/>
    </location>
</feature>
<feature type="region of interest" description="Linker 1" evidence="3">
    <location>
        <begin position="167"/>
        <end position="185"/>
    </location>
</feature>
<feature type="region of interest" description="Coil 1B" evidence="3">
    <location>
        <begin position="186"/>
        <end position="277"/>
    </location>
</feature>
<feature type="region of interest" description="Linker 12" evidence="3">
    <location>
        <begin position="278"/>
        <end position="301"/>
    </location>
</feature>
<feature type="region of interest" description="Coil 2" evidence="3">
    <location>
        <begin position="302"/>
        <end position="440"/>
    </location>
</feature>
<feature type="region of interest" description="Tail" evidence="3">
    <location>
        <begin position="441"/>
        <end position="524"/>
    </location>
</feature>
<feature type="region of interest" description="Disordered" evidence="5">
    <location>
        <begin position="491"/>
        <end position="524"/>
    </location>
</feature>
<feature type="compositionally biased region" description="Basic and acidic residues" evidence="5">
    <location>
        <begin position="494"/>
        <end position="509"/>
    </location>
</feature>
<feature type="compositionally biased region" description="Low complexity" evidence="5">
    <location>
        <begin position="510"/>
        <end position="524"/>
    </location>
</feature>
<feature type="site" description="Stutter" evidence="3">
    <location>
        <position position="382"/>
    </location>
</feature>
<feature type="sequence variant" evidence="6">
    <original>S</original>
    <variation>G</variation>
    <location>
        <position position="439"/>
    </location>
</feature>
<organism evidence="8">
    <name type="scientific">Felis catus</name>
    <name type="common">Cat</name>
    <name type="synonym">Felis silvestris catus</name>
    <dbReference type="NCBI Taxonomy" id="9685"/>
    <lineage>
        <taxon>Eukaryota</taxon>
        <taxon>Metazoa</taxon>
        <taxon>Chordata</taxon>
        <taxon>Craniata</taxon>
        <taxon>Vertebrata</taxon>
        <taxon>Euteleostomi</taxon>
        <taxon>Mammalia</taxon>
        <taxon>Eutheria</taxon>
        <taxon>Laurasiatheria</taxon>
        <taxon>Carnivora</taxon>
        <taxon>Feliformia</taxon>
        <taxon>Felidae</taxon>
        <taxon>Felinae</taxon>
        <taxon>Felis</taxon>
    </lineage>
</organism>
<reference key="1">
    <citation type="journal article" date="2010" name="Mamm. Genome">
        <title>The naked truth: Sphynx and Devon Rex cat breed mutations in KRT71.</title>
        <authorList>
            <person name="Gandolfi B."/>
            <person name="Outerbridge C.A."/>
            <person name="Beresford L.G."/>
            <person name="Myers J.A."/>
            <person name="Pimentel M."/>
            <person name="Alhaddad H."/>
            <person name="Grahn J.C."/>
            <person name="Grahn R.A."/>
            <person name="Lyons L.A."/>
        </authorList>
    </citation>
    <scope>NUCLEOTIDE SEQUENCE [MRNA]</scope>
    <scope>VARIANT GLY-439</scope>
    <scope>POLYMORPHISM</scope>
</reference>
<dbReference type="EMBL" id="HM564031">
    <property type="protein sequence ID" value="ADM23868.1"/>
    <property type="molecule type" value="mRNA"/>
</dbReference>
<dbReference type="RefSeq" id="NP_001182168.1">
    <property type="nucleotide sequence ID" value="NM_001195239.1"/>
</dbReference>
<dbReference type="SMR" id="E1AB55"/>
<dbReference type="GeneID" id="100500727"/>
<dbReference type="KEGG" id="fca:100500727"/>
<dbReference type="CTD" id="112802"/>
<dbReference type="eggNOG" id="ENOG502SK67">
    <property type="taxonomic scope" value="Eukaryota"/>
</dbReference>
<dbReference type="HOGENOM" id="CLU_012560_6_1_1"/>
<dbReference type="InParanoid" id="E1AB55"/>
<dbReference type="OrthoDB" id="2441647at2759"/>
<dbReference type="Proteomes" id="UP000011712">
    <property type="component" value="Unplaced"/>
</dbReference>
<dbReference type="GO" id="GO:0005737">
    <property type="term" value="C:cytoplasm"/>
    <property type="evidence" value="ECO:0007669"/>
    <property type="project" value="UniProtKB-KW"/>
</dbReference>
<dbReference type="GO" id="GO:0045095">
    <property type="term" value="C:keratin filament"/>
    <property type="evidence" value="ECO:0000318"/>
    <property type="project" value="GO_Central"/>
</dbReference>
<dbReference type="GO" id="GO:0030280">
    <property type="term" value="F:structural constituent of skin epidermis"/>
    <property type="evidence" value="ECO:0000318"/>
    <property type="project" value="GO_Central"/>
</dbReference>
<dbReference type="GO" id="GO:0045109">
    <property type="term" value="P:intermediate filament organization"/>
    <property type="evidence" value="ECO:0000318"/>
    <property type="project" value="GO_Central"/>
</dbReference>
<dbReference type="GO" id="GO:0031424">
    <property type="term" value="P:keratinization"/>
    <property type="evidence" value="ECO:0000318"/>
    <property type="project" value="GO_Central"/>
</dbReference>
<dbReference type="FunFam" id="1.20.5.1160:FF:000001">
    <property type="entry name" value="Keratin type II"/>
    <property type="match status" value="1"/>
</dbReference>
<dbReference type="FunFam" id="1.20.5.170:FF:000004">
    <property type="entry name" value="Keratin, type II cytoskeletal 5"/>
    <property type="match status" value="1"/>
</dbReference>
<dbReference type="FunFam" id="1.20.5.500:FF:000001">
    <property type="entry name" value="Type II keratin 23"/>
    <property type="match status" value="1"/>
</dbReference>
<dbReference type="Gene3D" id="1.20.5.170">
    <property type="match status" value="1"/>
</dbReference>
<dbReference type="Gene3D" id="1.20.5.500">
    <property type="entry name" value="Single helix bin"/>
    <property type="match status" value="1"/>
</dbReference>
<dbReference type="Gene3D" id="1.20.5.1160">
    <property type="entry name" value="Vasodilator-stimulated phosphoprotein"/>
    <property type="match status" value="1"/>
</dbReference>
<dbReference type="InterPro" id="IPR018039">
    <property type="entry name" value="IF_conserved"/>
</dbReference>
<dbReference type="InterPro" id="IPR039008">
    <property type="entry name" value="IF_rod_dom"/>
</dbReference>
<dbReference type="InterPro" id="IPR032444">
    <property type="entry name" value="Keratin_2_head"/>
</dbReference>
<dbReference type="InterPro" id="IPR003054">
    <property type="entry name" value="Keratin_II"/>
</dbReference>
<dbReference type="PANTHER" id="PTHR45616">
    <property type="entry name" value="GATA-TYPE DOMAIN-CONTAINING PROTEIN"/>
    <property type="match status" value="1"/>
</dbReference>
<dbReference type="PANTHER" id="PTHR45616:SF16">
    <property type="entry name" value="KERATIN, TYPE II CYTOSKELETAL 71"/>
    <property type="match status" value="1"/>
</dbReference>
<dbReference type="Pfam" id="PF00038">
    <property type="entry name" value="Filament"/>
    <property type="match status" value="1"/>
</dbReference>
<dbReference type="Pfam" id="PF16208">
    <property type="entry name" value="Keratin_2_head"/>
    <property type="match status" value="2"/>
</dbReference>
<dbReference type="PRINTS" id="PR01276">
    <property type="entry name" value="TYPE2KERATIN"/>
</dbReference>
<dbReference type="SMART" id="SM01391">
    <property type="entry name" value="Filament"/>
    <property type="match status" value="1"/>
</dbReference>
<dbReference type="SUPFAM" id="SSF64593">
    <property type="entry name" value="Intermediate filament protein, coiled coil region"/>
    <property type="match status" value="3"/>
</dbReference>
<dbReference type="PROSITE" id="PS00226">
    <property type="entry name" value="IF_ROD_1"/>
    <property type="match status" value="1"/>
</dbReference>
<dbReference type="PROSITE" id="PS51842">
    <property type="entry name" value="IF_ROD_2"/>
    <property type="match status" value="1"/>
</dbReference>
<comment type="function">
    <text evidence="2">Plays a central role in hair formation. Essential component of keratin intermediate filaments in the inner root sheath (IRS) of the hair follicle.</text>
</comment>
<comment type="subunit">
    <text evidence="1">Heterodimer of a type I and a type II keratin. Associates with KRT16 and/or KRT17 (By similarity).</text>
</comment>
<comment type="subcellular location">
    <subcellularLocation>
        <location evidence="2">Cytoplasm</location>
        <location evidence="2">Cytoskeleton</location>
    </subcellularLocation>
</comment>
<comment type="polymorphism">
    <text evidence="6">A complex variation, consisting of an 81-bp deletion, including the last 4 bp of intron 6 and the first 77 bp of exon 7, followed by 2 insertions was identified. This variation was called Rex polymorphism or 'Re'. All sequenced Devon Rex cats, a breed characterized by curly hair phenotype, were homozygous for this variation and loss of homozygosity was associated with normal hair production (PubMed:20953787). A variation affecting the 5'-splice site at the junction of exon 4 and intron 4 was identified in 2 breeds, Sphynx and Kohana, that are characterized by a hairless phenotype. This variation occurred in the heterozygous or homozygous state in these breeds. It has been called hairless or hr allele and has been suggested of a cause of the hairless phenotype (PubMed:20953787).</text>
</comment>
<comment type="similarity">
    <text evidence="7">Belongs to the intermediate filament family.</text>
</comment>
<protein>
    <recommendedName>
        <fullName>Keratin, type II cytoskeletal 71</fullName>
    </recommendedName>
    <alternativeName>
        <fullName>Cytokeratin-71</fullName>
        <shortName>CK-71</shortName>
    </alternativeName>
    <alternativeName>
        <fullName>Keratin-71</fullName>
        <shortName>K71</shortName>
    </alternativeName>
</protein>
<evidence type="ECO:0000250" key="1"/>
<evidence type="ECO:0000250" key="2">
    <source>
        <dbReference type="UniProtKB" id="Q3SY84"/>
    </source>
</evidence>
<evidence type="ECO:0000255" key="3"/>
<evidence type="ECO:0000255" key="4">
    <source>
        <dbReference type="PROSITE-ProRule" id="PRU01188"/>
    </source>
</evidence>
<evidence type="ECO:0000256" key="5">
    <source>
        <dbReference type="SAM" id="MobiDB-lite"/>
    </source>
</evidence>
<evidence type="ECO:0000269" key="6">
    <source>
    </source>
</evidence>
<evidence type="ECO:0000305" key="7"/>
<evidence type="ECO:0000312" key="8">
    <source>
        <dbReference type="EMBL" id="ADM23868.1"/>
    </source>
</evidence>
<keyword id="KW-0175">Coiled coil</keyword>
<keyword id="KW-0963">Cytoplasm</keyword>
<keyword id="KW-0206">Cytoskeleton</keyword>
<keyword id="KW-0403">Intermediate filament</keyword>
<keyword id="KW-0416">Keratin</keyword>
<keyword id="KW-1185">Reference proteome</keyword>
<name>K2C71_FELCA</name>